<proteinExistence type="inferred from homology"/>
<organism>
    <name type="scientific">Cupriavidus pinatubonensis (strain JMP 134 / LMG 1197)</name>
    <name type="common">Cupriavidus necator (strain JMP 134)</name>
    <dbReference type="NCBI Taxonomy" id="264198"/>
    <lineage>
        <taxon>Bacteria</taxon>
        <taxon>Pseudomonadati</taxon>
        <taxon>Pseudomonadota</taxon>
        <taxon>Betaproteobacteria</taxon>
        <taxon>Burkholderiales</taxon>
        <taxon>Burkholderiaceae</taxon>
        <taxon>Cupriavidus</taxon>
    </lineage>
</organism>
<feature type="chain" id="PRO_1000040621" description="3,4-dihydroxy-2-butanone 4-phosphate synthase">
    <location>
        <begin position="1"/>
        <end position="223"/>
    </location>
</feature>
<feature type="binding site" evidence="1">
    <location>
        <begin position="47"/>
        <end position="48"/>
    </location>
    <ligand>
        <name>D-ribulose 5-phosphate</name>
        <dbReference type="ChEBI" id="CHEBI:58121"/>
    </ligand>
</feature>
<feature type="binding site" evidence="1">
    <location>
        <position position="48"/>
    </location>
    <ligand>
        <name>Mg(2+)</name>
        <dbReference type="ChEBI" id="CHEBI:18420"/>
        <label>1</label>
    </ligand>
</feature>
<feature type="binding site" evidence="1">
    <location>
        <position position="48"/>
    </location>
    <ligand>
        <name>Mg(2+)</name>
        <dbReference type="ChEBI" id="CHEBI:18420"/>
        <label>2</label>
    </ligand>
</feature>
<feature type="binding site" evidence="1">
    <location>
        <position position="52"/>
    </location>
    <ligand>
        <name>D-ribulose 5-phosphate</name>
        <dbReference type="ChEBI" id="CHEBI:58121"/>
    </ligand>
</feature>
<feature type="binding site" evidence="1">
    <location>
        <begin position="160"/>
        <end position="164"/>
    </location>
    <ligand>
        <name>D-ribulose 5-phosphate</name>
        <dbReference type="ChEBI" id="CHEBI:58121"/>
    </ligand>
</feature>
<feature type="binding site" evidence="1">
    <location>
        <position position="163"/>
    </location>
    <ligand>
        <name>Mg(2+)</name>
        <dbReference type="ChEBI" id="CHEBI:18420"/>
        <label>2</label>
    </ligand>
</feature>
<feature type="binding site" evidence="1">
    <location>
        <position position="184"/>
    </location>
    <ligand>
        <name>D-ribulose 5-phosphate</name>
        <dbReference type="ChEBI" id="CHEBI:58121"/>
    </ligand>
</feature>
<feature type="site" description="Essential for catalytic activity" evidence="1">
    <location>
        <position position="146"/>
    </location>
</feature>
<feature type="site" description="Essential for catalytic activity" evidence="1">
    <location>
        <position position="184"/>
    </location>
</feature>
<dbReference type="EC" id="4.1.99.12" evidence="1"/>
<dbReference type="EMBL" id="CP000091">
    <property type="protein sequence ID" value="AAZ63385.1"/>
    <property type="molecule type" value="Genomic_DNA"/>
</dbReference>
<dbReference type="SMR" id="Q46TZ9"/>
<dbReference type="STRING" id="264198.Reut_B4029"/>
<dbReference type="KEGG" id="reu:Reut_B4029"/>
<dbReference type="eggNOG" id="COG0108">
    <property type="taxonomic scope" value="Bacteria"/>
</dbReference>
<dbReference type="HOGENOM" id="CLU_020273_3_0_4"/>
<dbReference type="OrthoDB" id="9793111at2"/>
<dbReference type="UniPathway" id="UPA00275">
    <property type="reaction ID" value="UER00399"/>
</dbReference>
<dbReference type="GO" id="GO:0005829">
    <property type="term" value="C:cytosol"/>
    <property type="evidence" value="ECO:0007669"/>
    <property type="project" value="TreeGrafter"/>
</dbReference>
<dbReference type="GO" id="GO:0008686">
    <property type="term" value="F:3,4-dihydroxy-2-butanone-4-phosphate synthase activity"/>
    <property type="evidence" value="ECO:0007669"/>
    <property type="project" value="UniProtKB-UniRule"/>
</dbReference>
<dbReference type="GO" id="GO:0000287">
    <property type="term" value="F:magnesium ion binding"/>
    <property type="evidence" value="ECO:0007669"/>
    <property type="project" value="UniProtKB-UniRule"/>
</dbReference>
<dbReference type="GO" id="GO:0030145">
    <property type="term" value="F:manganese ion binding"/>
    <property type="evidence" value="ECO:0007669"/>
    <property type="project" value="UniProtKB-UniRule"/>
</dbReference>
<dbReference type="GO" id="GO:0009231">
    <property type="term" value="P:riboflavin biosynthetic process"/>
    <property type="evidence" value="ECO:0007669"/>
    <property type="project" value="UniProtKB-UniRule"/>
</dbReference>
<dbReference type="FunFam" id="3.90.870.10:FF:000002">
    <property type="entry name" value="3,4-dihydroxy-2-butanone 4-phosphate synthase"/>
    <property type="match status" value="1"/>
</dbReference>
<dbReference type="Gene3D" id="3.90.870.10">
    <property type="entry name" value="DHBP synthase"/>
    <property type="match status" value="1"/>
</dbReference>
<dbReference type="HAMAP" id="MF_00180">
    <property type="entry name" value="RibB"/>
    <property type="match status" value="1"/>
</dbReference>
<dbReference type="InterPro" id="IPR017945">
    <property type="entry name" value="DHBP_synth_RibB-like_a/b_dom"/>
</dbReference>
<dbReference type="InterPro" id="IPR000422">
    <property type="entry name" value="DHBP_synthase_RibB"/>
</dbReference>
<dbReference type="NCBIfam" id="TIGR00506">
    <property type="entry name" value="ribB"/>
    <property type="match status" value="1"/>
</dbReference>
<dbReference type="PANTHER" id="PTHR21327:SF38">
    <property type="entry name" value="3,4-DIHYDROXY-2-BUTANONE 4-PHOSPHATE SYNTHASE"/>
    <property type="match status" value="1"/>
</dbReference>
<dbReference type="PANTHER" id="PTHR21327">
    <property type="entry name" value="GTP CYCLOHYDROLASE II-RELATED"/>
    <property type="match status" value="1"/>
</dbReference>
<dbReference type="Pfam" id="PF00926">
    <property type="entry name" value="DHBP_synthase"/>
    <property type="match status" value="1"/>
</dbReference>
<dbReference type="SUPFAM" id="SSF55821">
    <property type="entry name" value="YrdC/RibB"/>
    <property type="match status" value="1"/>
</dbReference>
<gene>
    <name evidence="1" type="primary">ribB</name>
    <name type="ordered locus">Reut_B4029</name>
</gene>
<name>RIBB_CUPPJ</name>
<reference key="1">
    <citation type="journal article" date="2010" name="PLoS ONE">
        <title>The complete multipartite genome sequence of Cupriavidus necator JMP134, a versatile pollutant degrader.</title>
        <authorList>
            <person name="Lykidis A."/>
            <person name="Perez-Pantoja D."/>
            <person name="Ledger T."/>
            <person name="Mavromatis K."/>
            <person name="Anderson I.J."/>
            <person name="Ivanova N.N."/>
            <person name="Hooper S.D."/>
            <person name="Lapidus A."/>
            <person name="Lucas S."/>
            <person name="Gonzalez B."/>
            <person name="Kyrpides N.C."/>
        </authorList>
    </citation>
    <scope>NUCLEOTIDE SEQUENCE [LARGE SCALE GENOMIC DNA]</scope>
    <source>
        <strain>JMP134 / LMG 1197</strain>
    </source>
</reference>
<evidence type="ECO:0000255" key="1">
    <source>
        <dbReference type="HAMAP-Rule" id="MF_00180"/>
    </source>
</evidence>
<accession>Q46TZ9</accession>
<protein>
    <recommendedName>
        <fullName evidence="1">3,4-dihydroxy-2-butanone 4-phosphate synthase</fullName>
        <shortName evidence="1">DHBP synthase</shortName>
        <ecNumber evidence="1">4.1.99.12</ecNumber>
    </recommendedName>
</protein>
<sequence length="223" mass="23924">MPSLSHESDSITLAADADERPLALRIAQALDAMREGRPVVLLDDDDRENEADLILAAECLTPSNMAMMIRECSGIVCLCLTTDKVRQLGLRPMVENNRSQYGTAFTVSIEAREGVTTGVSAVDRITTIRAAIAKDAGTDAVVSPGHVFPLVAVDGGVLVRRGHTEGSVELARMAGLSPAAVLCELMNPDGTMARRPEALSFAEMYRLPILTIADLVAWREIHG</sequence>
<comment type="function">
    <text evidence="1">Catalyzes the conversion of D-ribulose 5-phosphate to formate and 3,4-dihydroxy-2-butanone 4-phosphate.</text>
</comment>
<comment type="catalytic activity">
    <reaction evidence="1">
        <text>D-ribulose 5-phosphate = (2S)-2-hydroxy-3-oxobutyl phosphate + formate + H(+)</text>
        <dbReference type="Rhea" id="RHEA:18457"/>
        <dbReference type="ChEBI" id="CHEBI:15378"/>
        <dbReference type="ChEBI" id="CHEBI:15740"/>
        <dbReference type="ChEBI" id="CHEBI:58121"/>
        <dbReference type="ChEBI" id="CHEBI:58830"/>
        <dbReference type="EC" id="4.1.99.12"/>
    </reaction>
</comment>
<comment type="cofactor">
    <cofactor evidence="1">
        <name>Mg(2+)</name>
        <dbReference type="ChEBI" id="CHEBI:18420"/>
    </cofactor>
    <cofactor evidence="1">
        <name>Mn(2+)</name>
        <dbReference type="ChEBI" id="CHEBI:29035"/>
    </cofactor>
    <text evidence="1">Binds 2 divalent metal cations per subunit. Magnesium or manganese.</text>
</comment>
<comment type="pathway">
    <text evidence="1">Cofactor biosynthesis; riboflavin biosynthesis; 2-hydroxy-3-oxobutyl phosphate from D-ribulose 5-phosphate: step 1/1.</text>
</comment>
<comment type="subunit">
    <text evidence="1">Homodimer.</text>
</comment>
<comment type="similarity">
    <text evidence="1">Belongs to the DHBP synthase family.</text>
</comment>
<keyword id="KW-0456">Lyase</keyword>
<keyword id="KW-0460">Magnesium</keyword>
<keyword id="KW-0464">Manganese</keyword>
<keyword id="KW-0479">Metal-binding</keyword>
<keyword id="KW-0686">Riboflavin biosynthesis</keyword>